<keyword id="KW-0238">DNA-binding</keyword>
<keyword id="KW-1032">Host cell membrane</keyword>
<keyword id="KW-1035">Host cytoplasm</keyword>
<keyword id="KW-1043">Host membrane</keyword>
<keyword id="KW-1048">Host nucleus</keyword>
<keyword id="KW-0945">Host-virus interaction</keyword>
<keyword id="KW-0472">Membrane</keyword>
<keyword id="KW-1185">Reference proteome</keyword>
<keyword id="KW-0813">Transport</keyword>
<keyword id="KW-0916">Viral movement protein</keyword>
<sequence>MYASKYKRGSSNYQRRGYSRYQGFRRTAIVTRHDGKRRQHQSNKSNEDPKMLVQCIRENQFGPDFVMSHNTAISTFINYPQLGKIEPNRCRSYIKLKRLRFKGTVKIERMHTDVNMDGLSPKIEGVFSIVIVVDRKPHLSPSGCLHTFDELFGARINSHGNLAVMPSLKDRFYIRHLLKRVLSVDKDTTMIDVEGSTLLSNKRYNMWSTFNDFDHDSCNGVYANIAKNALLVYYCWMSDIMSKASTFVSYDLDYVG</sequence>
<dbReference type="EMBL" id="M10080">
    <property type="protein sequence ID" value="AAA46322.1"/>
    <property type="molecule type" value="Genomic_DNA"/>
</dbReference>
<dbReference type="Proteomes" id="UP000006572">
    <property type="component" value="Genome"/>
</dbReference>
<dbReference type="GO" id="GO:0043657">
    <property type="term" value="C:host cell"/>
    <property type="evidence" value="ECO:0007669"/>
    <property type="project" value="InterPro"/>
</dbReference>
<dbReference type="GO" id="GO:0030430">
    <property type="term" value="C:host cell cytoplasm"/>
    <property type="evidence" value="ECO:0007669"/>
    <property type="project" value="UniProtKB-SubCell"/>
</dbReference>
<dbReference type="GO" id="GO:0042025">
    <property type="term" value="C:host cell nucleus"/>
    <property type="evidence" value="ECO:0007669"/>
    <property type="project" value="UniProtKB-SubCell"/>
</dbReference>
<dbReference type="GO" id="GO:0020002">
    <property type="term" value="C:host cell plasma membrane"/>
    <property type="evidence" value="ECO:0007669"/>
    <property type="project" value="UniProtKB-SubCell"/>
</dbReference>
<dbReference type="GO" id="GO:0016020">
    <property type="term" value="C:membrane"/>
    <property type="evidence" value="ECO:0007669"/>
    <property type="project" value="UniProtKB-KW"/>
</dbReference>
<dbReference type="GO" id="GO:0019028">
    <property type="term" value="C:viral capsid"/>
    <property type="evidence" value="ECO:0007669"/>
    <property type="project" value="InterPro"/>
</dbReference>
<dbReference type="GO" id="GO:0003697">
    <property type="term" value="F:single-stranded DNA binding"/>
    <property type="evidence" value="ECO:0007669"/>
    <property type="project" value="InterPro"/>
</dbReference>
<dbReference type="GO" id="GO:0005198">
    <property type="term" value="F:structural molecule activity"/>
    <property type="evidence" value="ECO:0007669"/>
    <property type="project" value="InterPro"/>
</dbReference>
<dbReference type="GO" id="GO:0051027">
    <property type="term" value="P:DNA transport"/>
    <property type="evidence" value="ECO:0007669"/>
    <property type="project" value="InterPro"/>
</dbReference>
<dbReference type="GO" id="GO:0046740">
    <property type="term" value="P:transport of virus in host, cell to cell"/>
    <property type="evidence" value="ECO:0007669"/>
    <property type="project" value="UniProtKB-KW"/>
</dbReference>
<dbReference type="InterPro" id="IPR001530">
    <property type="entry name" value="Gemini_BR1"/>
</dbReference>
<dbReference type="InterPro" id="IPR000263">
    <property type="entry name" value="GV_A/BR1_coat"/>
</dbReference>
<dbReference type="Pfam" id="PF00844">
    <property type="entry name" value="Gemini_coat"/>
    <property type="match status" value="1"/>
</dbReference>
<dbReference type="PRINTS" id="PR00223">
    <property type="entry name" value="GEMCOATARBR1"/>
</dbReference>
<dbReference type="PRINTS" id="PR00225">
    <property type="entry name" value="GEMCOATBR1"/>
</dbReference>
<feature type="chain" id="PRO_0000222261" description="Nuclear shuttle protein">
    <location>
        <begin position="1"/>
        <end position="256"/>
    </location>
</feature>
<feature type="region of interest" description="Interaction with Arabidopsis thaliana NSI protein" evidence="1">
    <location>
        <begin position="150"/>
        <end position="187"/>
    </location>
</feature>
<feature type="short sequence motif" description="Bipartite nuclear localization signal" evidence="1">
    <location>
        <begin position="21"/>
        <end position="42"/>
    </location>
</feature>
<feature type="short sequence motif" description="Nuclear localization signal" evidence="1">
    <location>
        <begin position="81"/>
        <end position="96"/>
    </location>
</feature>
<protein>
    <recommendedName>
        <fullName>Nuclear shuttle protein</fullName>
        <shortName>NSP</shortName>
    </recommendedName>
    <alternativeName>
        <fullName>Protein BR1</fullName>
    </alternativeName>
    <alternativeName>
        <fullName>Protein BV1</fullName>
    </alternativeName>
</protein>
<accession>P0CK41</accession>
<accession>P06000</accession>
<organism>
    <name type="scientific">Bean golden yellow mosaic virus (isolate Puerto Rico)</name>
    <name type="common">BGYMV</name>
    <name type="synonym">Bean golden mosaic virus (isolate Puerto Rico)</name>
    <dbReference type="NCBI Taxonomy" id="222448"/>
    <lineage>
        <taxon>Viruses</taxon>
        <taxon>Monodnaviria</taxon>
        <taxon>Shotokuvirae</taxon>
        <taxon>Cressdnaviricota</taxon>
        <taxon>Repensiviricetes</taxon>
        <taxon>Geplafuvirales</taxon>
        <taxon>Geminiviridae</taxon>
        <taxon>Begomovirus</taxon>
        <taxon>Bean golden yellow mosaic virus</taxon>
    </lineage>
</organism>
<gene>
    <name type="ORF">BR1</name>
    <name type="ORF">BV1</name>
</gene>
<reference key="1">
    <citation type="journal article" date="1985" name="Proc. Natl. Acad. Sci. U.S.A.">
        <title>Nucleotide sequence of bean golden mosaic virus and a model for gene regulation in geminiviruses.</title>
        <authorList>
            <person name="Howarth A.J."/>
            <person name="Caton J."/>
            <person name="Bossert M."/>
            <person name="Goodman R.M."/>
        </authorList>
    </citation>
    <scope>NUCLEOTIDE SEQUENCE [GENOMIC DNA]</scope>
</reference>
<proteinExistence type="inferred from homology"/>
<name>NSP_BGYMV</name>
<evidence type="ECO:0000250" key="1"/>
<evidence type="ECO:0000305" key="2"/>
<organismHost>
    <name type="scientific">Macroptilium lathyroides</name>
    <dbReference type="NCBI Taxonomy" id="260885"/>
</organismHost>
<organismHost>
    <name type="scientific">Malvastrum coromandelianum</name>
    <dbReference type="NCBI Taxonomy" id="108453"/>
</organismHost>
<organismHost>
    <name type="scientific">Phaseolus lunatus</name>
    <name type="common">Lima bean</name>
    <name type="synonym">Phaseolus limensis</name>
    <dbReference type="NCBI Taxonomy" id="3884"/>
</organismHost>
<organismHost>
    <name type="scientific">Phaseolus vulgaris</name>
    <name type="common">Kidney bean</name>
    <name type="synonym">French bean</name>
    <dbReference type="NCBI Taxonomy" id="3885"/>
</organismHost>
<comment type="function">
    <text evidence="1">Binds to the genomic viral ssDNA, shuttles it into and out of the cell nucleus. Begomoviruses use 2 proteins to transport their DNA from cell to cell. The nuclear shuttle protein (NSP) shuttles it between nucleus and cytoplasm and the movement protein (MP) probably transports the DNA-NSP complex to the cell periphery and facilitates movement across the cell wall (By similarity).</text>
</comment>
<comment type="subunit">
    <text evidence="1">Binds to single-stranded and double-stranded viral DNA. Interacts with the host nuclear shuttle interacting (NSI) protein. This interaction may allow NSP to recruit NSI monomers to the viral genome and thus regulate nuclear export of viral genome by NSP (By similarity).</text>
</comment>
<comment type="subcellular location">
    <subcellularLocation>
        <location evidence="1">Host nucleus</location>
    </subcellularLocation>
    <subcellularLocation>
        <location evidence="1">Host cytoplasm</location>
    </subcellularLocation>
    <subcellularLocation>
        <location evidence="1">Host cell membrane</location>
        <topology evidence="1">Peripheral membrane protein</topology>
        <orientation evidence="1">Cytoplasmic side</orientation>
    </subcellularLocation>
    <text evidence="1">Translocated to the plasma membrane by the movement protein BC1.</text>
</comment>
<comment type="similarity">
    <text evidence="2">Belongs to the begomovirus nuclear shuttle protein family.</text>
</comment>